<gene>
    <name type="primary">CYP80B2</name>
</gene>
<comment type="function">
    <text>3'-hydroxylation of (S)-N-methylcoclaurine.</text>
</comment>
<comment type="catalytic activity">
    <reaction evidence="2">
        <text>(S)-N-methylcoclaurine + reduced [NADPH--hemoprotein reductase] + O2 = (S)-3'-hydroxy-N-methylcoclaurine + oxidized [NADPH--hemoprotein reductase] + H2O + H(+)</text>
        <dbReference type="Rhea" id="RHEA:16649"/>
        <dbReference type="Rhea" id="RHEA-COMP:11964"/>
        <dbReference type="Rhea" id="RHEA-COMP:11965"/>
        <dbReference type="ChEBI" id="CHEBI:15377"/>
        <dbReference type="ChEBI" id="CHEBI:15378"/>
        <dbReference type="ChEBI" id="CHEBI:15379"/>
        <dbReference type="ChEBI" id="CHEBI:57618"/>
        <dbReference type="ChEBI" id="CHEBI:57993"/>
        <dbReference type="ChEBI" id="CHEBI:58010"/>
        <dbReference type="ChEBI" id="CHEBI:58210"/>
        <dbReference type="EC" id="1.14.14.102"/>
    </reaction>
</comment>
<comment type="cofactor">
    <cofactor>
        <name>heme</name>
        <dbReference type="ChEBI" id="CHEBI:30413"/>
    </cofactor>
</comment>
<comment type="pathway">
    <text>Alkaloid biosynthesis; (S)-reticuline biosynthesis; (S)-reticuline from (S)-norcoclaurine: step 3/4.</text>
</comment>
<comment type="subcellular location">
    <subcellularLocation>
        <location evidence="4">Endoplasmic reticulum membrane</location>
        <topology evidence="4">Single-pass membrane protein</topology>
    </subcellularLocation>
    <subcellularLocation>
        <location evidence="4">Microsome membrane</location>
        <topology evidence="4">Single-pass membrane protein</topology>
    </subcellularLocation>
</comment>
<comment type="similarity">
    <text evidence="4">Belongs to the cytochrome P450 family.</text>
</comment>
<organism>
    <name type="scientific">Eschscholzia californica</name>
    <name type="common">California poppy</name>
    <dbReference type="NCBI Taxonomy" id="3467"/>
    <lineage>
        <taxon>Eukaryota</taxon>
        <taxon>Viridiplantae</taxon>
        <taxon>Streptophyta</taxon>
        <taxon>Embryophyta</taxon>
        <taxon>Tracheophyta</taxon>
        <taxon>Spermatophyta</taxon>
        <taxon>Magnoliopsida</taxon>
        <taxon>Ranunculales</taxon>
        <taxon>Papaveraceae</taxon>
        <taxon>Papaveroideae</taxon>
        <taxon>Eschscholzia</taxon>
    </lineage>
</organism>
<accession>O64900</accession>
<reference key="1">
    <citation type="journal article" date="1998" name="Plant J.">
        <title>Molecular cloning and functional heterologous expression of two alleles encoding (S)-N-methylcoclaurine 3'-hydroxylase (CYP80B1), a new methyl jasmonate-inducible cytochrome P-450-dependent mono-oxygenase of benzylisoquinoline alkaloid biosynthesis.</title>
        <authorList>
            <person name="Pauli H.H."/>
            <person name="Kutchan T.M."/>
        </authorList>
    </citation>
    <scope>NUCLEOTIDE SEQUENCE [MRNA]</scope>
</reference>
<feature type="chain" id="PRO_0000052158" description="(S)-N-methylcoclaurine 3'-hydroxylase isozyme 2">
    <location>
        <begin position="1"/>
        <end position="488"/>
    </location>
</feature>
<feature type="transmembrane region" description="Helical" evidence="3">
    <location>
        <begin position="3"/>
        <end position="23"/>
    </location>
</feature>
<feature type="binding site" description="axial binding residue" evidence="1">
    <location>
        <position position="430"/>
    </location>
    <ligand>
        <name>heme</name>
        <dbReference type="ChEBI" id="CHEBI:30413"/>
    </ligand>
    <ligandPart>
        <name>Fe</name>
        <dbReference type="ChEBI" id="CHEBI:18248"/>
    </ligandPart>
</feature>
<name>C80B2_ESCCA</name>
<sequence>MEVVTVALIAVIISSILYLLFGSSGHKNLPPGPKPWPIVGNLLQLGEKPHAQFAELAQTYGDIFTLKMGTETVVVASTSSAASEILKTHDRILSARYVFQSFRVKGHVENSIVWSDCTETWKNLRKVCRTELFTQKMIESQAHVREKKCEEMVEYLMKKQGEEVKIVEVIFGTLVNIFGNLIFSQNIFELGXPNSGSSEFKEYLWRMLELGNSTNPADYFPMLGKFDLFGQRKEVAECLKGIYAIWGAMLQERKLAKKVDGYQSKNDFVDVCLDSGLNDYQINALLMELFGAGTETSASTIEWAMTELTKNPKITAKLRSELQTVVGERSVKESDFPNLPYLEATVKETLRLHPPTPLLLPRRALETCTILNYTIPKDCQIMVNAWGIGRDPKTWIDPLTFSPERFLNSSVDFRGNDFSLIPFGAGRRICPGLPIANQFIALLVATFVQNLDWCLPNGMSVDHLIVEEKFGLTLQKEPPLFIVPKSRV</sequence>
<evidence type="ECO:0000250" key="1"/>
<evidence type="ECO:0000250" key="2">
    <source>
        <dbReference type="UniProtKB" id="O64899"/>
    </source>
</evidence>
<evidence type="ECO:0000255" key="3"/>
<evidence type="ECO:0000305" key="4"/>
<keyword id="KW-0256">Endoplasmic reticulum</keyword>
<keyword id="KW-0349">Heme</keyword>
<keyword id="KW-0408">Iron</keyword>
<keyword id="KW-0472">Membrane</keyword>
<keyword id="KW-0479">Metal-binding</keyword>
<keyword id="KW-0492">Microsome</keyword>
<keyword id="KW-0503">Monooxygenase</keyword>
<keyword id="KW-0560">Oxidoreductase</keyword>
<keyword id="KW-0812">Transmembrane</keyword>
<keyword id="KW-1133">Transmembrane helix</keyword>
<protein>
    <recommendedName>
        <fullName>(S)-N-methylcoclaurine 3'-hydroxylase isozyme 2</fullName>
        <ecNumber evidence="2">1.14.14.102</ecNumber>
    </recommendedName>
    <alternativeName>
        <fullName>Cytochrome P450 80B2</fullName>
    </alternativeName>
</protein>
<dbReference type="EC" id="1.14.14.102" evidence="2"/>
<dbReference type="EMBL" id="AF014801">
    <property type="protein sequence ID" value="AAC39453.1"/>
    <property type="molecule type" value="mRNA"/>
</dbReference>
<dbReference type="PIR" id="T07963">
    <property type="entry name" value="T07963"/>
</dbReference>
<dbReference type="KEGG" id="ag:AAC39453"/>
<dbReference type="UniPathway" id="UPA00306">
    <property type="reaction ID" value="UER00443"/>
</dbReference>
<dbReference type="GO" id="GO:0005789">
    <property type="term" value="C:endoplasmic reticulum membrane"/>
    <property type="evidence" value="ECO:0007669"/>
    <property type="project" value="UniProtKB-SubCell"/>
</dbReference>
<dbReference type="GO" id="GO:0020037">
    <property type="term" value="F:heme binding"/>
    <property type="evidence" value="ECO:0007669"/>
    <property type="project" value="InterPro"/>
</dbReference>
<dbReference type="GO" id="GO:0005506">
    <property type="term" value="F:iron ion binding"/>
    <property type="evidence" value="ECO:0007669"/>
    <property type="project" value="InterPro"/>
</dbReference>
<dbReference type="GO" id="GO:0050593">
    <property type="term" value="F:N-methylcoclaurine 3'-monooxygenase activity"/>
    <property type="evidence" value="ECO:0007669"/>
    <property type="project" value="UniProtKB-EC"/>
</dbReference>
<dbReference type="GO" id="GO:0033075">
    <property type="term" value="P:isoquinoline alkaloid biosynthetic process"/>
    <property type="evidence" value="ECO:0007669"/>
    <property type="project" value="UniProtKB-ARBA"/>
</dbReference>
<dbReference type="CDD" id="cd11073">
    <property type="entry name" value="CYP76-like"/>
    <property type="match status" value="1"/>
</dbReference>
<dbReference type="FunFam" id="1.10.630.10:FF:000126">
    <property type="entry name" value="Predicted protein"/>
    <property type="match status" value="1"/>
</dbReference>
<dbReference type="Gene3D" id="1.10.630.10">
    <property type="entry name" value="Cytochrome P450"/>
    <property type="match status" value="1"/>
</dbReference>
<dbReference type="InterPro" id="IPR001128">
    <property type="entry name" value="Cyt_P450"/>
</dbReference>
<dbReference type="InterPro" id="IPR017972">
    <property type="entry name" value="Cyt_P450_CS"/>
</dbReference>
<dbReference type="InterPro" id="IPR002401">
    <property type="entry name" value="Cyt_P450_E_grp-I"/>
</dbReference>
<dbReference type="InterPro" id="IPR036396">
    <property type="entry name" value="Cyt_P450_sf"/>
</dbReference>
<dbReference type="PANTHER" id="PTHR47950:SF49">
    <property type="entry name" value="CYTOCHROME P450"/>
    <property type="match status" value="1"/>
</dbReference>
<dbReference type="PANTHER" id="PTHR47950">
    <property type="entry name" value="CYTOCHROME P450, FAMILY 76, SUBFAMILY C, POLYPEPTIDE 5-RELATED"/>
    <property type="match status" value="1"/>
</dbReference>
<dbReference type="Pfam" id="PF00067">
    <property type="entry name" value="p450"/>
    <property type="match status" value="1"/>
</dbReference>
<dbReference type="PRINTS" id="PR00463">
    <property type="entry name" value="EP450I"/>
</dbReference>
<dbReference type="PRINTS" id="PR00385">
    <property type="entry name" value="P450"/>
</dbReference>
<dbReference type="SUPFAM" id="SSF48264">
    <property type="entry name" value="Cytochrome P450"/>
    <property type="match status" value="1"/>
</dbReference>
<dbReference type="PROSITE" id="PS00086">
    <property type="entry name" value="CYTOCHROME_P450"/>
    <property type="match status" value="1"/>
</dbReference>
<proteinExistence type="evidence at transcript level"/>